<comment type="function">
    <text evidence="2">Catalyzes the ATP- and formate-dependent formylation of 5-aminoimidazole-4-carboxamide-1-beta-d-ribofuranosyl 5'-monophosphate (AICAR) to 5-formaminoimidazole-4-carboxamide-1-beta-d-ribofuranosyl 5'-monophosphate (FAICAR) in the absence of folates.</text>
</comment>
<comment type="catalytic activity">
    <reaction evidence="2">
        <text>5-amino-1-(5-phospho-beta-D-ribosyl)imidazole-4-carboxamide + formate + ATP = 5-formamido-1-(5-phospho-D-ribosyl)imidazole-4-carboxamide + ADP + phosphate</text>
        <dbReference type="Rhea" id="RHEA:24836"/>
        <dbReference type="ChEBI" id="CHEBI:15740"/>
        <dbReference type="ChEBI" id="CHEBI:30616"/>
        <dbReference type="ChEBI" id="CHEBI:43474"/>
        <dbReference type="ChEBI" id="CHEBI:58467"/>
        <dbReference type="ChEBI" id="CHEBI:58475"/>
        <dbReference type="ChEBI" id="CHEBI:456216"/>
        <dbReference type="EC" id="6.3.4.23"/>
    </reaction>
</comment>
<comment type="cofactor">
    <cofactor evidence="1">
        <name>Mg(2+)</name>
        <dbReference type="ChEBI" id="CHEBI:18420"/>
    </cofactor>
    <cofactor evidence="1">
        <name>Mn(2+)</name>
        <dbReference type="ChEBI" id="CHEBI:29035"/>
    </cofactor>
    <text evidence="1">Binds 1 Mg(2+) or Mn(2+) ion per subunit.</text>
</comment>
<comment type="pathway">
    <text evidence="2">Purine metabolism; IMP biosynthesis via de novo pathway; 5-formamido-1-(5-phospho-D-ribosyl)imidazole-4-carboxamide from 5-amino-1-(5-phospho-D-ribosyl)imidazole-4-carboxamide (formate route): step 1/1.</text>
</comment>
<comment type="similarity">
    <text evidence="2">Belongs to the phosphohexose mutase family.</text>
</comment>
<comment type="sequence caution" evidence="3">
    <conflict type="erroneous initiation">
        <sequence resource="EMBL-CDS" id="AAK40581"/>
    </conflict>
</comment>
<dbReference type="EC" id="6.3.4.23" evidence="2"/>
<dbReference type="EMBL" id="AE006641">
    <property type="protein sequence ID" value="AAK40581.1"/>
    <property type="status" value="ALT_INIT"/>
    <property type="molecule type" value="Genomic_DNA"/>
</dbReference>
<dbReference type="PIR" id="F90165">
    <property type="entry name" value="F90165"/>
</dbReference>
<dbReference type="RefSeq" id="WP_014511515.1">
    <property type="nucleotide sequence ID" value="NC_002754.1"/>
</dbReference>
<dbReference type="SMR" id="Q980P7"/>
<dbReference type="STRING" id="273057.SSO0239"/>
<dbReference type="PaxDb" id="273057-SSO0239"/>
<dbReference type="EnsemblBacteria" id="AAK40581">
    <property type="protein sequence ID" value="AAK40581"/>
    <property type="gene ID" value="SSO0239"/>
</dbReference>
<dbReference type="KEGG" id="sso:SSO0239"/>
<dbReference type="PATRIC" id="fig|273057.12.peg.236"/>
<dbReference type="eggNOG" id="arCOG04346">
    <property type="taxonomic scope" value="Archaea"/>
</dbReference>
<dbReference type="HOGENOM" id="CLU_065084_0_0_2"/>
<dbReference type="InParanoid" id="Q980P7"/>
<dbReference type="UniPathway" id="UPA00074">
    <property type="reaction ID" value="UER00134"/>
</dbReference>
<dbReference type="Proteomes" id="UP000001974">
    <property type="component" value="Chromosome"/>
</dbReference>
<dbReference type="GO" id="GO:0005524">
    <property type="term" value="F:ATP binding"/>
    <property type="evidence" value="ECO:0007669"/>
    <property type="project" value="UniProtKB-KW"/>
</dbReference>
<dbReference type="GO" id="GO:0016879">
    <property type="term" value="F:ligase activity, forming carbon-nitrogen bonds"/>
    <property type="evidence" value="ECO:0007669"/>
    <property type="project" value="UniProtKB-UniRule"/>
</dbReference>
<dbReference type="GO" id="GO:0000287">
    <property type="term" value="F:magnesium ion binding"/>
    <property type="evidence" value="ECO:0007669"/>
    <property type="project" value="InterPro"/>
</dbReference>
<dbReference type="GO" id="GO:0006189">
    <property type="term" value="P:'de novo' IMP biosynthetic process"/>
    <property type="evidence" value="ECO:0007669"/>
    <property type="project" value="UniProtKB-UniRule"/>
</dbReference>
<dbReference type="Gene3D" id="3.40.50.20">
    <property type="match status" value="1"/>
</dbReference>
<dbReference type="Gene3D" id="3.30.1490.20">
    <property type="entry name" value="ATP-grasp fold, A domain"/>
    <property type="match status" value="1"/>
</dbReference>
<dbReference type="Gene3D" id="3.30.470.20">
    <property type="entry name" value="ATP-grasp fold, B domain"/>
    <property type="match status" value="1"/>
</dbReference>
<dbReference type="HAMAP" id="MF_01163">
    <property type="entry name" value="IMP_biosynth_PurP"/>
    <property type="match status" value="1"/>
</dbReference>
<dbReference type="InterPro" id="IPR011761">
    <property type="entry name" value="ATP-grasp"/>
</dbReference>
<dbReference type="InterPro" id="IPR013815">
    <property type="entry name" value="ATP_grasp_subdomain_1"/>
</dbReference>
<dbReference type="InterPro" id="IPR023656">
    <property type="entry name" value="IMP_biosynth_PurP"/>
</dbReference>
<dbReference type="InterPro" id="IPR009720">
    <property type="entry name" value="IMP_biosynth_PurP_C"/>
</dbReference>
<dbReference type="InterPro" id="IPR010672">
    <property type="entry name" value="IMP_biosynth_PurP_N"/>
</dbReference>
<dbReference type="InterPro" id="IPR016185">
    <property type="entry name" value="PreATP-grasp_dom_sf"/>
</dbReference>
<dbReference type="NCBIfam" id="NF009778">
    <property type="entry name" value="PRK13278.1-1"/>
    <property type="match status" value="1"/>
</dbReference>
<dbReference type="PANTHER" id="PTHR38147:SF2">
    <property type="entry name" value="5-FORMAMINOIMIDAZOLE-4-CARBOXAMIDE-1-(BETA)-D-RIBOFURANOSYL 5'-MONOPHOSPHATE SYNTHETASE"/>
    <property type="match status" value="1"/>
</dbReference>
<dbReference type="PANTHER" id="PTHR38147">
    <property type="entry name" value="5-FORMAMINOIMIDAZOLE-4-CARBOXAMIDE-1-(BETA)-D-RIBOFURANOSYL 5'-MONOPHOSPHATE SYNTHETASE-RELATED"/>
    <property type="match status" value="1"/>
</dbReference>
<dbReference type="Pfam" id="PF06849">
    <property type="entry name" value="DUF1246"/>
    <property type="match status" value="1"/>
</dbReference>
<dbReference type="Pfam" id="PF06973">
    <property type="entry name" value="DUF1297"/>
    <property type="match status" value="1"/>
</dbReference>
<dbReference type="PIRSF" id="PIRSF004602">
    <property type="entry name" value="ATPgrasp_PurP"/>
    <property type="match status" value="1"/>
</dbReference>
<dbReference type="SUPFAM" id="SSF56059">
    <property type="entry name" value="Glutathione synthetase ATP-binding domain-like"/>
    <property type="match status" value="1"/>
</dbReference>
<dbReference type="SUPFAM" id="SSF52440">
    <property type="entry name" value="PreATP-grasp domain"/>
    <property type="match status" value="1"/>
</dbReference>
<dbReference type="PROSITE" id="PS50975">
    <property type="entry name" value="ATP_GRASP"/>
    <property type="match status" value="1"/>
</dbReference>
<evidence type="ECO:0000250" key="1"/>
<evidence type="ECO:0000255" key="2">
    <source>
        <dbReference type="HAMAP-Rule" id="MF_01163"/>
    </source>
</evidence>
<evidence type="ECO:0000305" key="3"/>
<reference key="1">
    <citation type="journal article" date="2001" name="Proc. Natl. Acad. Sci. U.S.A.">
        <title>The complete genome of the crenarchaeon Sulfolobus solfataricus P2.</title>
        <authorList>
            <person name="She Q."/>
            <person name="Singh R.K."/>
            <person name="Confalonieri F."/>
            <person name="Zivanovic Y."/>
            <person name="Allard G."/>
            <person name="Awayez M.J."/>
            <person name="Chan-Weiher C.C.-Y."/>
            <person name="Clausen I.G."/>
            <person name="Curtis B.A."/>
            <person name="De Moors A."/>
            <person name="Erauso G."/>
            <person name="Fletcher C."/>
            <person name="Gordon P.M.K."/>
            <person name="Heikamp-de Jong I."/>
            <person name="Jeffries A.C."/>
            <person name="Kozera C.J."/>
            <person name="Medina N."/>
            <person name="Peng X."/>
            <person name="Thi-Ngoc H.P."/>
            <person name="Redder P."/>
            <person name="Schenk M.E."/>
            <person name="Theriault C."/>
            <person name="Tolstrup N."/>
            <person name="Charlebois R.L."/>
            <person name="Doolittle W.F."/>
            <person name="Duguet M."/>
            <person name="Gaasterland T."/>
            <person name="Garrett R.A."/>
            <person name="Ragan M.A."/>
            <person name="Sensen C.W."/>
            <person name="Van der Oost J."/>
        </authorList>
    </citation>
    <scope>NUCLEOTIDE SEQUENCE [LARGE SCALE GENOMIC DNA]</scope>
    <source>
        <strain>ATCC 35092 / DSM 1617 / JCM 11322 / P2</strain>
    </source>
</reference>
<sequence>MIIATIGSHSALQILHGAKKEGFQTMVITDNKRENFYKNFSFIDNIYAYASLDEAVSIINGIKDYGILIPHGSLVEYLGKERVDKIETKIFGNKKIFEWEADQKKKMELLRKSNIKIPEIFERPEDVDRLVIVKLNGAKGGKGYFLARNKSEVKEGIQKLIESKMIRDENEVIIQEYVVGVPMYFQFFYSDIINRTEIFGIDIRYETNIDGLRRLPFEYMKELKINPTFVVVGNIPAVARESLLPVALEYANNFVRTTKELVPPGMIGPFCLESIITDNSDIVVFEFSGRIVAGTNLYVNGSPYSWLYWDEPMSIGRRIAREIRVANEKDKLSLVVS</sequence>
<protein>
    <recommendedName>
        <fullName evidence="2">5-formaminoimidazole-4-carboxamide-1-(beta)-D-ribofuranosyl 5'-monophosphate synthetase</fullName>
        <ecNumber evidence="2">6.3.4.23</ecNumber>
    </recommendedName>
    <alternativeName>
        <fullName evidence="2">5-aminoimidazole-4-carboxamide-1-beta-D-ribofuranosyl 5'-monophosphate--formate ligase</fullName>
    </alternativeName>
</protein>
<name>PURP_SACS2</name>
<feature type="chain" id="PRO_0000348640" description="5-formaminoimidazole-4-carboxamide-1-(beta)-D-ribofuranosyl 5'-monophosphate synthetase">
    <location>
        <begin position="1"/>
        <end position="337"/>
    </location>
</feature>
<feature type="domain" description="ATP-grasp" evidence="2">
    <location>
        <begin position="94"/>
        <end position="324"/>
    </location>
</feature>
<feature type="binding site" evidence="2">
    <location>
        <position position="9"/>
    </location>
    <ligand>
        <name>5-amino-1-(5-phospho-beta-D-ribosyl)imidazole-4-carboxamide</name>
        <dbReference type="ChEBI" id="CHEBI:58475"/>
    </ligand>
</feature>
<feature type="binding site" evidence="2">
    <location>
        <position position="73"/>
    </location>
    <ligand>
        <name>5-amino-1-(5-phospho-beta-D-ribosyl)imidazole-4-carboxamide</name>
        <dbReference type="ChEBI" id="CHEBI:58475"/>
    </ligand>
</feature>
<feature type="binding site" evidence="2">
    <location>
        <begin position="124"/>
        <end position="184"/>
    </location>
    <ligand>
        <name>ATP</name>
        <dbReference type="ChEBI" id="CHEBI:30616"/>
    </ligand>
</feature>
<feature type="binding site" evidence="2">
    <location>
        <position position="206"/>
    </location>
    <ligand>
        <name>ATP</name>
        <dbReference type="ChEBI" id="CHEBI:30616"/>
    </ligand>
</feature>
<feature type="binding site" evidence="2">
    <location>
        <position position="234"/>
    </location>
    <ligand>
        <name>5-amino-1-(5-phospho-beta-D-ribosyl)imidazole-4-carboxamide</name>
        <dbReference type="ChEBI" id="CHEBI:58475"/>
    </ligand>
</feature>
<feature type="binding site" evidence="2">
    <location>
        <position position="273"/>
    </location>
    <ligand>
        <name>Mg(2+)</name>
        <dbReference type="ChEBI" id="CHEBI:18420"/>
    </ligand>
</feature>
<feature type="binding site" evidence="2">
    <location>
        <position position="286"/>
    </location>
    <ligand>
        <name>Mg(2+)</name>
        <dbReference type="ChEBI" id="CHEBI:18420"/>
    </ligand>
</feature>
<gene>
    <name evidence="2" type="primary">purP</name>
    <name type="ordered locus">SSO0239</name>
</gene>
<proteinExistence type="inferred from homology"/>
<organism>
    <name type="scientific">Saccharolobus solfataricus (strain ATCC 35092 / DSM 1617 / JCM 11322 / P2)</name>
    <name type="common">Sulfolobus solfataricus</name>
    <dbReference type="NCBI Taxonomy" id="273057"/>
    <lineage>
        <taxon>Archaea</taxon>
        <taxon>Thermoproteota</taxon>
        <taxon>Thermoprotei</taxon>
        <taxon>Sulfolobales</taxon>
        <taxon>Sulfolobaceae</taxon>
        <taxon>Saccharolobus</taxon>
    </lineage>
</organism>
<keyword id="KW-0067">ATP-binding</keyword>
<keyword id="KW-0436">Ligase</keyword>
<keyword id="KW-0460">Magnesium</keyword>
<keyword id="KW-0464">Manganese</keyword>
<keyword id="KW-0479">Metal-binding</keyword>
<keyword id="KW-0547">Nucleotide-binding</keyword>
<keyword id="KW-0658">Purine biosynthesis</keyword>
<keyword id="KW-1185">Reference proteome</keyword>
<accession>Q980P7</accession>